<organism>
    <name type="scientific">Desulfitobacterium hafniense (strain Y51)</name>
    <dbReference type="NCBI Taxonomy" id="138119"/>
    <lineage>
        <taxon>Bacteria</taxon>
        <taxon>Bacillati</taxon>
        <taxon>Bacillota</taxon>
        <taxon>Clostridia</taxon>
        <taxon>Eubacteriales</taxon>
        <taxon>Desulfitobacteriaceae</taxon>
        <taxon>Desulfitobacterium</taxon>
    </lineage>
</organism>
<accession>Q24MD8</accession>
<protein>
    <recommendedName>
        <fullName evidence="1">Ribosomal RNA large subunit methyltransferase H</fullName>
        <ecNumber evidence="1">2.1.1.177</ecNumber>
    </recommendedName>
    <alternativeName>
        <fullName evidence="1">23S rRNA (pseudouridine1915-N3)-methyltransferase</fullName>
    </alternativeName>
    <alternativeName>
        <fullName evidence="1">23S rRNA m3Psi1915 methyltransferase</fullName>
    </alternativeName>
    <alternativeName>
        <fullName evidence="1">rRNA (pseudouridine-N3-)-methyltransferase RlmH</fullName>
    </alternativeName>
</protein>
<sequence length="160" mass="18467">MLQIKIVAVGKIRERFLMEGIKEYAKRLSAYIRLEMTEIADEPCPERLSAADEERVKDREGERLLKGIGPQEHVILLDLQGKEFTSPDFSEYMDDLALMGKSSVTFIIGGSLGVSGEVRKRADYRWSFSRLTFPHPLMRLMLLEQIYRAMRISKGEPYHK</sequence>
<gene>
    <name evidence="1" type="primary">rlmH</name>
    <name type="ordered locus">DSY5015</name>
</gene>
<comment type="function">
    <text evidence="1">Specifically methylates the pseudouridine at position 1915 (m3Psi1915) in 23S rRNA.</text>
</comment>
<comment type="catalytic activity">
    <reaction evidence="1">
        <text>pseudouridine(1915) in 23S rRNA + S-adenosyl-L-methionine = N(3)-methylpseudouridine(1915) in 23S rRNA + S-adenosyl-L-homocysteine + H(+)</text>
        <dbReference type="Rhea" id="RHEA:42752"/>
        <dbReference type="Rhea" id="RHEA-COMP:10221"/>
        <dbReference type="Rhea" id="RHEA-COMP:10222"/>
        <dbReference type="ChEBI" id="CHEBI:15378"/>
        <dbReference type="ChEBI" id="CHEBI:57856"/>
        <dbReference type="ChEBI" id="CHEBI:59789"/>
        <dbReference type="ChEBI" id="CHEBI:65314"/>
        <dbReference type="ChEBI" id="CHEBI:74486"/>
        <dbReference type="EC" id="2.1.1.177"/>
    </reaction>
</comment>
<comment type="subunit">
    <text evidence="1">Homodimer.</text>
</comment>
<comment type="subcellular location">
    <subcellularLocation>
        <location evidence="1">Cytoplasm</location>
    </subcellularLocation>
</comment>
<comment type="similarity">
    <text evidence="1">Belongs to the RNA methyltransferase RlmH family.</text>
</comment>
<proteinExistence type="inferred from homology"/>
<dbReference type="EC" id="2.1.1.177" evidence="1"/>
<dbReference type="EMBL" id="AP008230">
    <property type="protein sequence ID" value="BAE86804.1"/>
    <property type="molecule type" value="Genomic_DNA"/>
</dbReference>
<dbReference type="SMR" id="Q24MD8"/>
<dbReference type="STRING" id="138119.DSY5015"/>
<dbReference type="KEGG" id="dsy:DSY5015"/>
<dbReference type="eggNOG" id="COG1576">
    <property type="taxonomic scope" value="Bacteria"/>
</dbReference>
<dbReference type="HOGENOM" id="CLU_100552_0_0_9"/>
<dbReference type="Proteomes" id="UP000001946">
    <property type="component" value="Chromosome"/>
</dbReference>
<dbReference type="GO" id="GO:0005737">
    <property type="term" value="C:cytoplasm"/>
    <property type="evidence" value="ECO:0007669"/>
    <property type="project" value="UniProtKB-SubCell"/>
</dbReference>
<dbReference type="GO" id="GO:0070038">
    <property type="term" value="F:rRNA (pseudouridine-N3-)-methyltransferase activity"/>
    <property type="evidence" value="ECO:0007669"/>
    <property type="project" value="UniProtKB-UniRule"/>
</dbReference>
<dbReference type="CDD" id="cd18081">
    <property type="entry name" value="RlmH-like"/>
    <property type="match status" value="1"/>
</dbReference>
<dbReference type="Gene3D" id="3.40.1280.10">
    <property type="match status" value="1"/>
</dbReference>
<dbReference type="HAMAP" id="MF_00658">
    <property type="entry name" value="23SrRNA_methyltr_H"/>
    <property type="match status" value="1"/>
</dbReference>
<dbReference type="InterPro" id="IPR029028">
    <property type="entry name" value="Alpha/beta_knot_MTases"/>
</dbReference>
<dbReference type="InterPro" id="IPR003742">
    <property type="entry name" value="RlmH-like"/>
</dbReference>
<dbReference type="InterPro" id="IPR029026">
    <property type="entry name" value="tRNA_m1G_MTases_N"/>
</dbReference>
<dbReference type="NCBIfam" id="NF000985">
    <property type="entry name" value="PRK00103.1-3"/>
    <property type="match status" value="1"/>
</dbReference>
<dbReference type="NCBIfam" id="TIGR00246">
    <property type="entry name" value="tRNA_RlmH_YbeA"/>
    <property type="match status" value="1"/>
</dbReference>
<dbReference type="PANTHER" id="PTHR33603">
    <property type="entry name" value="METHYLTRANSFERASE"/>
    <property type="match status" value="1"/>
</dbReference>
<dbReference type="PANTHER" id="PTHR33603:SF1">
    <property type="entry name" value="RIBOSOMAL RNA LARGE SUBUNIT METHYLTRANSFERASE H"/>
    <property type="match status" value="1"/>
</dbReference>
<dbReference type="Pfam" id="PF02590">
    <property type="entry name" value="SPOUT_MTase"/>
    <property type="match status" value="1"/>
</dbReference>
<dbReference type="PIRSF" id="PIRSF004505">
    <property type="entry name" value="MT_bac"/>
    <property type="match status" value="1"/>
</dbReference>
<dbReference type="SUPFAM" id="SSF75217">
    <property type="entry name" value="alpha/beta knot"/>
    <property type="match status" value="1"/>
</dbReference>
<reference key="1">
    <citation type="journal article" date="2006" name="J. Bacteriol.">
        <title>Complete genome sequence of the dehalorespiring bacterium Desulfitobacterium hafniense Y51 and comparison with Dehalococcoides ethenogenes 195.</title>
        <authorList>
            <person name="Nonaka H."/>
            <person name="Keresztes G."/>
            <person name="Shinoda Y."/>
            <person name="Ikenaga Y."/>
            <person name="Abe M."/>
            <person name="Naito K."/>
            <person name="Inatomi K."/>
            <person name="Furukawa K."/>
            <person name="Inui M."/>
            <person name="Yukawa H."/>
        </authorList>
    </citation>
    <scope>NUCLEOTIDE SEQUENCE [LARGE SCALE GENOMIC DNA]</scope>
    <source>
        <strain>Y51</strain>
    </source>
</reference>
<evidence type="ECO:0000255" key="1">
    <source>
        <dbReference type="HAMAP-Rule" id="MF_00658"/>
    </source>
</evidence>
<keyword id="KW-0963">Cytoplasm</keyword>
<keyword id="KW-0489">Methyltransferase</keyword>
<keyword id="KW-1185">Reference proteome</keyword>
<keyword id="KW-0698">rRNA processing</keyword>
<keyword id="KW-0949">S-adenosyl-L-methionine</keyword>
<keyword id="KW-0808">Transferase</keyword>
<name>RLMH_DESHY</name>
<feature type="chain" id="PRO_0000260552" description="Ribosomal RNA large subunit methyltransferase H">
    <location>
        <begin position="1"/>
        <end position="160"/>
    </location>
</feature>
<feature type="binding site" evidence="1">
    <location>
        <position position="77"/>
    </location>
    <ligand>
        <name>S-adenosyl-L-methionine</name>
        <dbReference type="ChEBI" id="CHEBI:59789"/>
    </ligand>
</feature>
<feature type="binding site" evidence="1">
    <location>
        <position position="109"/>
    </location>
    <ligand>
        <name>S-adenosyl-L-methionine</name>
        <dbReference type="ChEBI" id="CHEBI:59789"/>
    </ligand>
</feature>
<feature type="binding site" evidence="1">
    <location>
        <begin position="128"/>
        <end position="133"/>
    </location>
    <ligand>
        <name>S-adenosyl-L-methionine</name>
        <dbReference type="ChEBI" id="CHEBI:59789"/>
    </ligand>
</feature>